<gene>
    <name evidence="14" type="primary">NDUFV1</name>
    <name type="synonym">UQOR1</name>
</gene>
<feature type="transit peptide" description="Mitochondrion" evidence="4">
    <location>
        <begin position="1"/>
        <end position="20"/>
    </location>
</feature>
<feature type="chain" id="PRO_0000019976" description="NADH dehydrogenase [ubiquinone] flavoprotein 1, mitochondrial">
    <location>
        <begin position="21"/>
        <end position="464"/>
    </location>
</feature>
<feature type="binding site" evidence="1">
    <location>
        <begin position="87"/>
        <end position="96"/>
    </location>
    <ligand>
        <name>NADH</name>
        <dbReference type="ChEBI" id="CHEBI:57945"/>
    </ligand>
</feature>
<feature type="binding site" evidence="1">
    <location>
        <begin position="199"/>
        <end position="247"/>
    </location>
    <ligand>
        <name>FMN</name>
        <dbReference type="ChEBI" id="CHEBI:58210"/>
    </ligand>
</feature>
<feature type="binding site" evidence="8 15 16 17 18">
    <location>
        <position position="379"/>
    </location>
    <ligand>
        <name>[4Fe-4S] cluster</name>
        <dbReference type="ChEBI" id="CHEBI:49883"/>
    </ligand>
</feature>
<feature type="binding site" evidence="8 15 16 17 18">
    <location>
        <position position="382"/>
    </location>
    <ligand>
        <name>[4Fe-4S] cluster</name>
        <dbReference type="ChEBI" id="CHEBI:49883"/>
    </ligand>
</feature>
<feature type="binding site" evidence="8 15 16 17 18">
    <location>
        <position position="385"/>
    </location>
    <ligand>
        <name>[4Fe-4S] cluster</name>
        <dbReference type="ChEBI" id="CHEBI:49883"/>
    </ligand>
</feature>
<feature type="binding site" evidence="8 15 16 17 18">
    <location>
        <position position="425"/>
    </location>
    <ligand>
        <name>[4Fe-4S] cluster</name>
        <dbReference type="ChEBI" id="CHEBI:49883"/>
    </ligand>
</feature>
<feature type="modified residue" description="N6-acetyllysine; alternate" evidence="3">
    <location>
        <position position="81"/>
    </location>
</feature>
<feature type="modified residue" description="N6-succinyllysine; alternate" evidence="3">
    <location>
        <position position="81"/>
    </location>
</feature>
<feature type="modified residue" description="N6-acetyllysine" evidence="3">
    <location>
        <position position="104"/>
    </location>
</feature>
<feature type="modified residue" description="Omega-N-methylarginine" evidence="3">
    <location>
        <position position="257"/>
    </location>
</feature>
<feature type="modified residue" description="N6-acetyllysine" evidence="3">
    <location>
        <position position="375"/>
    </location>
</feature>
<feature type="splice variant" id="VSP_003730" description="In isoform 2." evidence="10">
    <location>
        <begin position="16"/>
        <end position="24"/>
    </location>
</feature>
<feature type="sequence variant" id="VAR_014480" description="In dbSNP:rs1800670.">
    <original>I</original>
    <variation>V</variation>
    <location>
        <position position="76"/>
    </location>
</feature>
<feature type="sequence variant" id="VAR_019534" description="In MC1DN4; dbSNP:rs121913661." evidence="6">
    <original>E</original>
    <variation>K</variation>
    <location>
        <position position="214"/>
    </location>
</feature>
<feature type="sequence variant" id="VAR_014481" description="In dbSNP:rs1043770.">
    <original>N</original>
    <variation>Y</variation>
    <location>
        <position position="277"/>
    </location>
</feature>
<feature type="sequence variant" id="VAR_008846" description="In MC1DN4; dbSNP:rs121913660." evidence="5">
    <original>A</original>
    <variation>V</variation>
    <location>
        <position position="341"/>
    </location>
</feature>
<feature type="sequence variant" id="VAR_008847" description="In MC1DN4; dbSNP:rs121913659." evidence="5">
    <original>T</original>
    <variation>M</variation>
    <location>
        <position position="423"/>
    </location>
</feature>
<feature type="sequence conflict" description="In Ref. 7; AAB24883." evidence="12" ref="7">
    <original>I</original>
    <variation>V</variation>
    <location>
        <position position="80"/>
    </location>
</feature>
<feature type="sequence conflict" description="In Ref. 8; AAB29698." evidence="12" ref="8">
    <original>G</original>
    <variation>A</variation>
    <location>
        <position position="150"/>
    </location>
</feature>
<feature type="sequence conflict" description="In Ref. 1; CAA76757." evidence="12" ref="1">
    <original>G</original>
    <variation>F</variation>
    <location>
        <position position="306"/>
    </location>
</feature>
<feature type="sequence conflict" description="In Ref. 1; CAA76757." evidence="12" ref="1">
    <original>N</original>
    <variation>Y</variation>
    <location>
        <position position="313"/>
    </location>
</feature>
<feature type="turn" evidence="19">
    <location>
        <begin position="37"/>
        <end position="39"/>
    </location>
</feature>
<feature type="helix" evidence="19">
    <location>
        <begin position="53"/>
        <end position="58"/>
    </location>
</feature>
<feature type="turn" evidence="19">
    <location>
        <begin position="59"/>
        <end position="68"/>
    </location>
</feature>
<feature type="helix" evidence="19">
    <location>
        <begin position="75"/>
        <end position="81"/>
    </location>
</feature>
<feature type="turn" evidence="19">
    <location>
        <begin position="82"/>
        <end position="84"/>
    </location>
</feature>
<feature type="strand" evidence="19">
    <location>
        <begin position="88"/>
        <end position="91"/>
    </location>
</feature>
<feature type="helix" evidence="19">
    <location>
        <begin position="95"/>
        <end position="100"/>
    </location>
</feature>
<feature type="helix" evidence="19">
    <location>
        <begin position="101"/>
        <end position="103"/>
    </location>
</feature>
<feature type="strand" evidence="19">
    <location>
        <begin position="114"/>
        <end position="116"/>
    </location>
</feature>
<feature type="helix" evidence="19">
    <location>
        <begin position="126"/>
        <end position="133"/>
    </location>
</feature>
<feature type="helix" evidence="19">
    <location>
        <begin position="135"/>
        <end position="149"/>
    </location>
</feature>
<feature type="strand" evidence="19">
    <location>
        <begin position="152"/>
        <end position="158"/>
    </location>
</feature>
<feature type="helix" evidence="19">
    <location>
        <begin position="164"/>
        <end position="178"/>
    </location>
</feature>
<feature type="strand" evidence="19">
    <location>
        <begin position="181"/>
        <end position="183"/>
    </location>
</feature>
<feature type="strand" evidence="19">
    <location>
        <begin position="186"/>
        <end position="188"/>
    </location>
</feature>
<feature type="strand" evidence="19">
    <location>
        <begin position="193"/>
        <end position="199"/>
    </location>
</feature>
<feature type="helix" evidence="19">
    <location>
        <begin position="204"/>
        <end position="207"/>
    </location>
</feature>
<feature type="helix" evidence="19">
    <location>
        <begin position="209"/>
        <end position="216"/>
    </location>
</feature>
<feature type="turn" evidence="19">
    <location>
        <begin position="230"/>
        <end position="232"/>
    </location>
</feature>
<feature type="helix" evidence="19">
    <location>
        <begin position="235"/>
        <end position="237"/>
    </location>
</feature>
<feature type="strand" evidence="19">
    <location>
        <begin position="242"/>
        <end position="244"/>
    </location>
</feature>
<feature type="helix" evidence="19">
    <location>
        <begin position="245"/>
        <end position="256"/>
    </location>
</feature>
<feature type="helix" evidence="19">
    <location>
        <begin position="259"/>
        <end position="263"/>
    </location>
</feature>
<feature type="strand" evidence="19">
    <location>
        <begin position="265"/>
        <end position="268"/>
    </location>
</feature>
<feature type="strand" evidence="19">
    <location>
        <begin position="272"/>
        <end position="284"/>
    </location>
</feature>
<feature type="strand" evidence="19">
    <location>
        <begin position="286"/>
        <end position="291"/>
    </location>
</feature>
<feature type="helix" evidence="19">
    <location>
        <begin position="296"/>
        <end position="301"/>
    </location>
</feature>
<feature type="turn" evidence="19">
    <location>
        <begin position="302"/>
        <end position="304"/>
    </location>
</feature>
<feature type="helix" evidence="19">
    <location>
        <begin position="311"/>
        <end position="313"/>
    </location>
</feature>
<feature type="strand" evidence="19">
    <location>
        <begin position="314"/>
        <end position="322"/>
    </location>
</feature>
<feature type="helix" evidence="19">
    <location>
        <begin position="329"/>
        <end position="332"/>
    </location>
</feature>
<feature type="strand" evidence="19">
    <location>
        <begin position="336"/>
        <end position="338"/>
    </location>
</feature>
<feature type="helix" evidence="19">
    <location>
        <begin position="339"/>
        <end position="344"/>
    </location>
</feature>
<feature type="helix" evidence="19">
    <location>
        <begin position="350"/>
        <end position="352"/>
    </location>
</feature>
<feature type="strand" evidence="19">
    <location>
        <begin position="353"/>
        <end position="358"/>
    </location>
</feature>
<feature type="helix" evidence="19">
    <location>
        <begin position="364"/>
        <end position="376"/>
    </location>
</feature>
<feature type="helix" evidence="19">
    <location>
        <begin position="383"/>
        <end position="401"/>
    </location>
</feature>
<feature type="helix" evidence="19">
    <location>
        <begin position="408"/>
        <end position="419"/>
    </location>
</feature>
<feature type="turn" evidence="19">
    <location>
        <begin position="420"/>
        <end position="422"/>
    </location>
</feature>
<feature type="strand" evidence="19">
    <location>
        <begin position="423"/>
        <end position="425"/>
    </location>
</feature>
<feature type="helix" evidence="19">
    <location>
        <begin position="427"/>
        <end position="454"/>
    </location>
</feature>
<reference key="1">
    <citation type="journal article" date="1999" name="Mamm. Genome">
        <title>The structure of the human NDUFV1 gene encoding the 51-kDa subunit of mitochondrial complex I.</title>
        <authorList>
            <person name="de Coo R.F.M."/>
            <person name="Buddiger P.A."/>
            <person name="Smeets H.J.M."/>
            <person name="van Oost B.A."/>
        </authorList>
    </citation>
    <scope>NUCLEOTIDE SEQUENCE [GENOMIC DNA]</scope>
</reference>
<reference key="2">
    <citation type="journal article" date="1998" name="Biochem. Biophys. Res. Commun.">
        <title>Cloning of the human mitochondrial 51 kDa subunit (NDUFV1) reveals a 100% antisense homology of its 3'UTR with the 5'UTR of the gamma-interferon inducible protein (IP-30) precursor: is this a link between mitochondrial myopathy and inflammation?</title>
        <authorList>
            <person name="Schuelke M."/>
            <person name="Loeffen J."/>
            <person name="Mariman E."/>
            <person name="Smeitink J."/>
            <person name="van den Heuvel L."/>
        </authorList>
    </citation>
    <scope>NUCLEOTIDE SEQUENCE [GENOMIC DNA / MRNA]</scope>
</reference>
<reference key="3">
    <citation type="journal article" date="2000" name="Proc. Natl. Acad. Sci. U.S.A.">
        <title>Gene expression profiling in the human hypothalamus-pituitary-adrenal axis and full-length cDNA cloning.</title>
        <authorList>
            <person name="Hu R.-M."/>
            <person name="Han Z.-G."/>
            <person name="Song H.-D."/>
            <person name="Peng Y.-D."/>
            <person name="Huang Q.-H."/>
            <person name="Ren S.-X."/>
            <person name="Gu Y.-J."/>
            <person name="Huang C.-H."/>
            <person name="Li Y.-B."/>
            <person name="Jiang C.-L."/>
            <person name="Fu G."/>
            <person name="Zhang Q.-H."/>
            <person name="Gu B.-W."/>
            <person name="Dai M."/>
            <person name="Mao Y.-F."/>
            <person name="Gao G.-F."/>
            <person name="Rong R."/>
            <person name="Ye M."/>
            <person name="Zhou J."/>
            <person name="Xu S.-H."/>
            <person name="Gu J."/>
            <person name="Shi J.-X."/>
            <person name="Jin W.-R."/>
            <person name="Zhang C.-K."/>
            <person name="Wu T.-M."/>
            <person name="Huang G.-Y."/>
            <person name="Chen Z."/>
            <person name="Chen M.-D."/>
            <person name="Chen J.-L."/>
        </authorList>
    </citation>
    <scope>NUCLEOTIDE SEQUENCE [LARGE SCALE MRNA]</scope>
    <source>
        <tissue>Pituitary</tissue>
    </source>
</reference>
<reference key="4">
    <citation type="submission" date="2004-06" db="EMBL/GenBank/DDBJ databases">
        <title>Cloning of human full open reading frames in Gateway(TM) system entry vector (pDONR201).</title>
        <authorList>
            <person name="Ebert L."/>
            <person name="Schick M."/>
            <person name="Neubert P."/>
            <person name="Schatten R."/>
            <person name="Henze S."/>
            <person name="Korn B."/>
        </authorList>
    </citation>
    <scope>NUCLEOTIDE SEQUENCE [LARGE SCALE MRNA] (ISOFORM 1)</scope>
</reference>
<reference key="5">
    <citation type="submission" date="2005-07" db="EMBL/GenBank/DDBJ databases">
        <authorList>
            <person name="Mural R.J."/>
            <person name="Istrail S."/>
            <person name="Sutton G.G."/>
            <person name="Florea L."/>
            <person name="Halpern A.L."/>
            <person name="Mobarry C.M."/>
            <person name="Lippert R."/>
            <person name="Walenz B."/>
            <person name="Shatkay H."/>
            <person name="Dew I."/>
            <person name="Miller J.R."/>
            <person name="Flanigan M.J."/>
            <person name="Edwards N.J."/>
            <person name="Bolanos R."/>
            <person name="Fasulo D."/>
            <person name="Halldorsson B.V."/>
            <person name="Hannenhalli S."/>
            <person name="Turner R."/>
            <person name="Yooseph S."/>
            <person name="Lu F."/>
            <person name="Nusskern D.R."/>
            <person name="Shue B.C."/>
            <person name="Zheng X.H."/>
            <person name="Zhong F."/>
            <person name="Delcher A.L."/>
            <person name="Huson D.H."/>
            <person name="Kravitz S.A."/>
            <person name="Mouchard L."/>
            <person name="Reinert K."/>
            <person name="Remington K.A."/>
            <person name="Clark A.G."/>
            <person name="Waterman M.S."/>
            <person name="Eichler E.E."/>
            <person name="Adams M.D."/>
            <person name="Hunkapiller M.W."/>
            <person name="Myers E.W."/>
            <person name="Venter J.C."/>
        </authorList>
    </citation>
    <scope>NUCLEOTIDE SEQUENCE [LARGE SCALE GENOMIC DNA]</scope>
</reference>
<reference key="6">
    <citation type="journal article" date="2004" name="Genome Res.">
        <title>The status, quality, and expansion of the NIH full-length cDNA project: the Mammalian Gene Collection (MGC).</title>
        <authorList>
            <consortium name="The MGC Project Team"/>
        </authorList>
    </citation>
    <scope>NUCLEOTIDE SEQUENCE [LARGE SCALE MRNA] (ISOFORMS 1 AND 2)</scope>
    <source>
        <tissue>Brain</tissue>
        <tissue>Eye</tissue>
    </source>
</reference>
<reference key="7">
    <citation type="journal article" date="1992" name="Genomics">
        <title>The human mitochondrial NADH: ubiquinone oxidoreductase 51-kDa subunit maps adjacent to the glutathione S-transferase P1-1 gene on chromosome 11q13.</title>
        <authorList>
            <person name="Spencer S.R."/>
            <person name="Taylor J.B."/>
            <person name="Cowell I.G."/>
            <person name="Xia C.L."/>
            <person name="Pemble S.E."/>
            <person name="Ketterer B."/>
        </authorList>
    </citation>
    <scope>NUCLEOTIDE SEQUENCE [GENOMIC DNA] OF 1-130</scope>
</reference>
<reference key="8">
    <citation type="journal article" date="1993" name="Genomics">
        <title>Chromosomal localization of the human gene encoding the 51-kDa subunit of mitochondrial complex I (NDUFV1) to 11q13.</title>
        <authorList>
            <person name="Ali S.T."/>
            <person name="Duncan A.M.V."/>
            <person name="Schappert K.T."/>
            <person name="Heng H.H.Q."/>
            <person name="Tsui L.-C."/>
            <person name="Chow W."/>
            <person name="Robinson B.H."/>
        </authorList>
    </citation>
    <scope>NUCLEOTIDE SEQUENCE [MRNA] OF 87-305</scope>
    <source>
        <tissue>Kidney</tissue>
    </source>
</reference>
<reference key="9">
    <citation type="journal article" date="2003" name="J. Biol. Chem.">
        <title>The subunit composition of the human NADH dehydrogenase obtained by rapid one-step immunopurification.</title>
        <authorList>
            <person name="Murray J."/>
            <person name="Zhang B."/>
            <person name="Taylor S.W."/>
            <person name="Oglesbee D."/>
            <person name="Fahy E."/>
            <person name="Marusich M.F."/>
            <person name="Ghosh S.S."/>
            <person name="Capaldi R.A."/>
        </authorList>
    </citation>
    <scope>IDENTIFICATION IN THE NADH-UBIQUINONE OXIDOREDUCTASE COMPLEX</scope>
    <scope>IDENTIFICATION BY MASS SPECTROMETRY</scope>
</reference>
<reference key="10">
    <citation type="journal article" date="2011" name="BMC Syst. Biol.">
        <title>Initial characterization of the human central proteome.</title>
        <authorList>
            <person name="Burkard T.R."/>
            <person name="Planyavsky M."/>
            <person name="Kaupe I."/>
            <person name="Breitwieser F.P."/>
            <person name="Buerckstuemmer T."/>
            <person name="Bennett K.L."/>
            <person name="Superti-Furga G."/>
            <person name="Colinge J."/>
        </authorList>
    </citation>
    <scope>IDENTIFICATION BY MASS SPECTROMETRY [LARGE SCALE ANALYSIS]</scope>
</reference>
<reference key="11">
    <citation type="journal article" date="2014" name="J. Proteomics">
        <title>An enzyme assisted RP-RPLC approach for in-depth analysis of human liver phosphoproteome.</title>
        <authorList>
            <person name="Bian Y."/>
            <person name="Song C."/>
            <person name="Cheng K."/>
            <person name="Dong M."/>
            <person name="Wang F."/>
            <person name="Huang J."/>
            <person name="Sun D."/>
            <person name="Wang L."/>
            <person name="Ye M."/>
            <person name="Zou H."/>
        </authorList>
    </citation>
    <scope>IDENTIFICATION BY MASS SPECTROMETRY [LARGE SCALE ANALYSIS]</scope>
    <source>
        <tissue>Liver</tissue>
    </source>
</reference>
<reference key="12">
    <citation type="journal article" date="2015" name="Proteomics">
        <title>N-terminome analysis of the human mitochondrial proteome.</title>
        <authorList>
            <person name="Vaca Jacome A.S."/>
            <person name="Rabilloud T."/>
            <person name="Schaeffer-Reiss C."/>
            <person name="Rompais M."/>
            <person name="Ayoub D."/>
            <person name="Lane L."/>
            <person name="Bairoch A."/>
            <person name="Van Dorsselaer A."/>
            <person name="Carapito C."/>
        </authorList>
    </citation>
    <scope>IDENTIFICATION BY MASS SPECTROMETRY [LARGE SCALE ANALYSIS]</scope>
</reference>
<reference evidence="15 16 17 18" key="13">
    <citation type="journal article" date="2017" name="Cell">
        <title>Architecture of human mitochondrial respiratory megacomplex I2III2IV2.</title>
        <authorList>
            <person name="Guo R."/>
            <person name="Zong S."/>
            <person name="Wu M."/>
            <person name="Gu J."/>
            <person name="Yang M."/>
        </authorList>
    </citation>
    <scope>STRUCTURE BY ELECTRON MICROSCOPY (3.40 ANGSTROMS) OF 27-457</scope>
    <scope>FUNCTION</scope>
    <scope>CATALYTIC ACTIVITY</scope>
    <scope>COFACTOR</scope>
    <scope>SUBUNIT</scope>
</reference>
<reference key="14">
    <citation type="journal article" date="2019" name="IScience">
        <title>Rewiring of the Human Mitochondrial Interactome during Neuronal Reprogramming Reveals Regulators of the Respirasome and Neurogenesis.</title>
        <authorList>
            <person name="Moutaoufik M.T."/>
            <person name="Malty R."/>
            <person name="Amin S."/>
            <person name="Zhang Q."/>
            <person name="Phanse S."/>
            <person name="Gagarinova A."/>
            <person name="Zilocchi M."/>
            <person name="Hoell L."/>
            <person name="Minic Z."/>
            <person name="Gagarinova M."/>
            <person name="Aoki H."/>
            <person name="Stockwell J."/>
            <person name="Jessulat M."/>
            <person name="Goebels F."/>
            <person name="Broderick K."/>
            <person name="Scott N.E."/>
            <person name="Vlasblom J."/>
            <person name="Musso G."/>
            <person name="Prasad B."/>
            <person name="Lamantea E."/>
            <person name="Garavaglia B."/>
            <person name="Rajput A."/>
            <person name="Murayama K."/>
            <person name="Okazaki Y."/>
            <person name="Foster L.J."/>
            <person name="Bader G.D."/>
            <person name="Cayabyab F.S."/>
            <person name="Babu M."/>
        </authorList>
    </citation>
    <scope>IDENTIFICATION BY MASS SPECTROMETRY</scope>
    <scope>INTERACTION WITH RAB5IF</scope>
</reference>
<reference key="15">
    <citation type="journal article" date="1999" name="Nat. Genet.">
        <title>Mutant NDUFV1 subunit of mitochondrial complex I causes leukodystrophy and myoclonic epilepsy.</title>
        <authorList>
            <person name="Schuelke M."/>
            <person name="Smeitink J."/>
            <person name="Mariman E."/>
            <person name="Loeffen J."/>
            <person name="Plecko B."/>
            <person name="Trijbels F."/>
            <person name="Stockler-Ipsiroglu S."/>
            <person name="van den Heuvel L."/>
        </authorList>
    </citation>
    <scope>INVOLVEMENT IN MC1DN4</scope>
    <scope>VARIANTS MC1DN4 VAL-341 AND MET-423</scope>
</reference>
<reference key="16">
    <citation type="journal article" date="2001" name="Am. J. Hum. Genet.">
        <title>Large-scale deletion and point mutations of the nuclear NDUFV1 and NDUFS1 genes in mitochondrial complex I deficiency.</title>
        <authorList>
            <person name="Benit P."/>
            <person name="Chretien D."/>
            <person name="Kadhom N."/>
            <person name="de Lonlay-Debeney P."/>
            <person name="Cormier-Daire V."/>
            <person name="Cabral A."/>
            <person name="Peudenier S."/>
            <person name="Rustin P."/>
            <person name="Munnich A."/>
            <person name="Roetig A."/>
        </authorList>
    </citation>
    <scope>INVOLVEMENT IN MC1DN4</scope>
    <scope>VARIANT MC1DN4 LYS-214</scope>
</reference>
<proteinExistence type="evidence at protein level"/>
<sequence>MLATRRLLGWSLPARVSVRFSGDTTAPKKTSFGSLKDEDRIFTNLYGRHDWRLKGSLSRGDWYKTKEILLKGPDWILGEIKTSGLRGRGGAGFPTGLKWSFMNKPSDGRPKYLVVNADEGEPGTCKDREILRHDPHKLLEGCLVGGRAMGARAAYIYIRGEFYNEASNLQVAIREAYEAGLIGKNACGSGYDFDVFVVRGAGAYICGEETALIESIEGKQGKPRLKPPFPADVGVFGCPTTVANVETVAVSPTICRRGGTWFAGFGRERNSGTKLFNISGHVNHPCTVEEEMSVPLKELIEKHAGGVTGGWDNLLAVIPGGSSTPLIPKSVCETVLMDFDALVQAQTGLGTAAVIVMDRSTDIVKAIARLIEFYKHESCGQCTPCREGVDWMNKVMARFVRGDARPAEIDSLWEISKQIEGHTICALGDGAAWPVQGLIRHFRPELEERMQRFAQQHQARQAAS</sequence>
<organism>
    <name type="scientific">Homo sapiens</name>
    <name type="common">Human</name>
    <dbReference type="NCBI Taxonomy" id="9606"/>
    <lineage>
        <taxon>Eukaryota</taxon>
        <taxon>Metazoa</taxon>
        <taxon>Chordata</taxon>
        <taxon>Craniata</taxon>
        <taxon>Vertebrata</taxon>
        <taxon>Euteleostomi</taxon>
        <taxon>Mammalia</taxon>
        <taxon>Eutheria</taxon>
        <taxon>Euarchontoglires</taxon>
        <taxon>Primates</taxon>
        <taxon>Haplorrhini</taxon>
        <taxon>Catarrhini</taxon>
        <taxon>Hominidae</taxon>
        <taxon>Homo</taxon>
    </lineage>
</organism>
<keyword id="KW-0002">3D-structure</keyword>
<keyword id="KW-0004">4Fe-4S</keyword>
<keyword id="KW-0007">Acetylation</keyword>
<keyword id="KW-0025">Alternative splicing</keyword>
<keyword id="KW-0225">Disease variant</keyword>
<keyword id="KW-0249">Electron transport</keyword>
<keyword id="KW-0285">Flavoprotein</keyword>
<keyword id="KW-0288">FMN</keyword>
<keyword id="KW-0408">Iron</keyword>
<keyword id="KW-0411">Iron-sulfur</keyword>
<keyword id="KW-0431">Leigh syndrome</keyword>
<keyword id="KW-0472">Membrane</keyword>
<keyword id="KW-0479">Metal-binding</keyword>
<keyword id="KW-0488">Methylation</keyword>
<keyword id="KW-0496">Mitochondrion</keyword>
<keyword id="KW-0999">Mitochondrion inner membrane</keyword>
<keyword id="KW-0520">NAD</keyword>
<keyword id="KW-0560">Oxidoreductase</keyword>
<keyword id="KW-1274">Primary mitochondrial disease</keyword>
<keyword id="KW-1267">Proteomics identification</keyword>
<keyword id="KW-1185">Reference proteome</keyword>
<keyword id="KW-0679">Respiratory chain</keyword>
<keyword id="KW-0809">Transit peptide</keyword>
<keyword id="KW-1278">Translocase</keyword>
<keyword id="KW-0813">Transport</keyword>
<keyword id="KW-0830">Ubiquinone</keyword>
<name>NDUV1_HUMAN</name>
<comment type="function">
    <text evidence="8">Core subunit of the mitochondrial membrane respiratory chain NADH dehydrogenase (Complex I) which catalyzes electron transfer from NADH through the respiratory chain, using ubiquinone as an electron acceptor (PubMed:28844695). Part of the peripheral arm of the enzyme, where the electrons from NADH are accepted by flavin mononucleotide (FMN) and then passed along a chain of iron-sulfur clusters by electron tunnelling to the final acceptor ubiquinone (PubMed:28844695). Contains FMN, which is the initial electron acceptor as well as one iron-sulfur cluster (PubMed:28844695).</text>
</comment>
<comment type="catalytic activity">
    <reaction evidence="13">
        <text>a ubiquinone + NADH + 5 H(+)(in) = a ubiquinol + NAD(+) + 4 H(+)(out)</text>
        <dbReference type="Rhea" id="RHEA:29091"/>
        <dbReference type="Rhea" id="RHEA-COMP:9565"/>
        <dbReference type="Rhea" id="RHEA-COMP:9566"/>
        <dbReference type="ChEBI" id="CHEBI:15378"/>
        <dbReference type="ChEBI" id="CHEBI:16389"/>
        <dbReference type="ChEBI" id="CHEBI:17976"/>
        <dbReference type="ChEBI" id="CHEBI:57540"/>
        <dbReference type="ChEBI" id="CHEBI:57945"/>
        <dbReference type="EC" id="7.1.1.2"/>
    </reaction>
    <physiologicalReaction direction="left-to-right" evidence="13">
        <dbReference type="Rhea" id="RHEA:29092"/>
    </physiologicalReaction>
</comment>
<comment type="cofactor">
    <cofactor evidence="8">
        <name>FMN</name>
        <dbReference type="ChEBI" id="CHEBI:58210"/>
    </cofactor>
    <text evidence="8">Binds 1 FMN.</text>
</comment>
<comment type="cofactor">
    <cofactor evidence="8">
        <name>[4Fe-4S] cluster</name>
        <dbReference type="ChEBI" id="CHEBI:49883"/>
    </cofactor>
    <text evidence="8">Binds 1 [4Fe-4S] cluster.</text>
</comment>
<comment type="subunit">
    <text evidence="7 8 9">Core subunit of respiratory chain NADH dehydrogenase (Complex I) which is composed of 45 different subunits (PubMed:12611891, PubMed:28844695). This is a component of the flavoprotein-sulfur (FP) fragment of the enzyme (PubMed:12611891). Interacts with RAB5IF (PubMed:31536960).</text>
</comment>
<comment type="interaction">
    <interactant intactId="EBI-748312">
        <id>P49821</id>
    </interactant>
    <interactant intactId="EBI-2875816">
        <id>Q9NP61</id>
        <label>ARFGAP3</label>
    </interactant>
    <organismsDiffer>false</organismsDiffer>
    <experiments>3</experiments>
</comment>
<comment type="interaction">
    <interactant intactId="EBI-748312">
        <id>P49821</id>
    </interactant>
    <interactant intactId="EBI-307461">
        <id>Q9Y297</id>
        <label>BTRC</label>
    </interactant>
    <organismsDiffer>false</organismsDiffer>
    <experiments>3</experiments>
</comment>
<comment type="interaction">
    <interactant intactId="EBI-748312">
        <id>P49821</id>
    </interactant>
    <interactant intactId="EBI-1050386">
        <id>P61201</id>
        <label>COPS2</label>
    </interactant>
    <organismsDiffer>false</organismsDiffer>
    <experiments>3</experiments>
</comment>
<comment type="interaction">
    <interactant intactId="EBI-748312">
        <id>P49821</id>
    </interactant>
    <interactant intactId="EBI-3867333">
        <id>A8MQ03</id>
        <label>CYSRT1</label>
    </interactant>
    <organismsDiffer>false</organismsDiffer>
    <experiments>3</experiments>
</comment>
<comment type="interaction">
    <interactant intactId="EBI-748312">
        <id>P49821</id>
    </interactant>
    <interactant intactId="EBI-8468186">
        <id>Q8IZU1</id>
        <label>FAM9A</label>
    </interactant>
    <organismsDiffer>false</organismsDiffer>
    <experiments>3</experiments>
</comment>
<comment type="interaction">
    <interactant intactId="EBI-748312">
        <id>P49821</id>
    </interactant>
    <interactant intactId="EBI-6262578">
        <id>Q8TCJ0-3</id>
        <label>FBXO25</label>
    </interactant>
    <organismsDiffer>false</organismsDiffer>
    <experiments>3</experiments>
</comment>
<comment type="interaction">
    <interactant intactId="EBI-748312">
        <id>P49821</id>
    </interactant>
    <interactant intactId="EBI-2506081">
        <id>Q6P3S6</id>
        <label>FBXO42</label>
    </interactant>
    <organismsDiffer>false</organismsDiffer>
    <experiments>3</experiments>
</comment>
<comment type="interaction">
    <interactant intactId="EBI-748312">
        <id>P49821</id>
    </interactant>
    <interactant intactId="EBI-399080">
        <id>Q92993</id>
        <label>KAT5</label>
    </interactant>
    <organismsDiffer>false</organismsDiffer>
    <experiments>3</experiments>
</comment>
<comment type="interaction">
    <interactant intactId="EBI-748312">
        <id>P49821</id>
    </interactant>
    <interactant intactId="EBI-11742507">
        <id>Q8TAP4-4</id>
        <label>LMO3</label>
    </interactant>
    <organismsDiffer>false</organismsDiffer>
    <experiments>3</experiments>
</comment>
<comment type="interaction">
    <interactant intactId="EBI-748312">
        <id>P49821</id>
    </interactant>
    <interactant intactId="EBI-2829677">
        <id>P41218</id>
        <label>MNDA</label>
    </interactant>
    <organismsDiffer>false</organismsDiffer>
    <experiments>3</experiments>
</comment>
<comment type="interaction">
    <interactant intactId="EBI-748312">
        <id>P49821</id>
    </interactant>
    <interactant intactId="EBI-721902">
        <id>P56181</id>
        <label>NDUFV3</label>
    </interactant>
    <organismsDiffer>false</organismsDiffer>
    <experiments>5</experiments>
</comment>
<comment type="interaction">
    <interactant intactId="EBI-748312">
        <id>P49821</id>
    </interactant>
    <interactant intactId="EBI-9091423">
        <id>Q96CV9-2</id>
        <label>OPTN</label>
    </interactant>
    <organismsDiffer>false</organismsDiffer>
    <experiments>3</experiments>
</comment>
<comment type="interaction">
    <interactant intactId="EBI-748312">
        <id>P49821</id>
    </interactant>
    <interactant intactId="EBI-1383528">
        <id>P17252</id>
        <label>PRKCA</label>
    </interactant>
    <organismsDiffer>false</organismsDiffer>
    <experiments>3</experiments>
</comment>
<comment type="interaction">
    <interactant intactId="EBI-748312">
        <id>P49821</id>
    </interactant>
    <interactant intactId="EBI-348394">
        <id>P25788-2</id>
        <label>PSMA3</label>
    </interactant>
    <organismsDiffer>false</organismsDiffer>
    <experiments>3</experiments>
</comment>
<comment type="interaction">
    <interactant intactId="EBI-748312">
        <id>P49821</id>
    </interactant>
    <interactant intactId="EBI-372273">
        <id>P20618</id>
        <label>PSMB1</label>
    </interactant>
    <organismsDiffer>false</organismsDiffer>
    <experiments>3</experiments>
</comment>
<comment type="interaction">
    <interactant intactId="EBI-748312">
        <id>P49821</id>
    </interactant>
    <interactant intactId="EBI-752143">
        <id>Q16401</id>
        <label>PSMD5</label>
    </interactant>
    <organismsDiffer>false</organismsDiffer>
    <experiments>3</experiments>
</comment>
<comment type="interaction">
    <interactant intactId="EBI-748312">
        <id>P49821</id>
    </interactant>
    <interactant intactId="EBI-11743772">
        <id>Q7Z6E9-3</id>
        <label>RBBP6</label>
    </interactant>
    <organismsDiffer>false</organismsDiffer>
    <experiments>3</experiments>
</comment>
<comment type="interaction">
    <interactant intactId="EBI-748312">
        <id>P49821</id>
    </interactant>
    <interactant intactId="EBI-2797992">
        <id>Q9H871</id>
        <label>RMND5A</label>
    </interactant>
    <organismsDiffer>false</organismsDiffer>
    <experiments>3</experiments>
</comment>
<comment type="interaction">
    <interactant intactId="EBI-748312">
        <id>P49821</id>
    </interactant>
    <interactant intactId="EBI-11750630">
        <id>Q9NTX7-2</id>
        <label>RNF146</label>
    </interactant>
    <organismsDiffer>false</organismsDiffer>
    <experiments>3</experiments>
</comment>
<comment type="interaction">
    <interactant intactId="EBI-748312">
        <id>P49821</id>
    </interactant>
    <interactant intactId="EBI-9090795">
        <id>Q15047-2</id>
        <label>SETDB1</label>
    </interactant>
    <organismsDiffer>false</organismsDiffer>
    <experiments>3</experiments>
</comment>
<comment type="interaction">
    <interactant intactId="EBI-748312">
        <id>P49821</id>
    </interactant>
    <interactant intactId="EBI-298027">
        <id>Q2TAY7</id>
        <label>SMU1</label>
    </interactant>
    <organismsDiffer>false</organismsDiffer>
    <experiments>3</experiments>
</comment>
<comment type="interaction">
    <interactant intactId="EBI-748312">
        <id>P49821</id>
    </interactant>
    <interactant intactId="EBI-11959123">
        <id>Q99932-2</id>
        <label>SPAG8</label>
    </interactant>
    <organismsDiffer>false</organismsDiffer>
    <experiments>3</experiments>
</comment>
<comment type="interaction">
    <interactant intactId="EBI-748312">
        <id>P49821</id>
    </interactant>
    <interactant intactId="EBI-21575846">
        <id>Q8WUA7-2</id>
        <label>TBC1D22A</label>
    </interactant>
    <organismsDiffer>false</organismsDiffer>
    <experiments>3</experiments>
</comment>
<comment type="interaction">
    <interactant intactId="EBI-748312">
        <id>P49821</id>
    </interactant>
    <interactant intactId="EBI-25876491">
        <id>Q96B65</id>
        <label>USP25</label>
    </interactant>
    <organismsDiffer>false</organismsDiffer>
    <experiments>3</experiments>
</comment>
<comment type="interaction">
    <interactant intactId="EBI-748312">
        <id>P49821</id>
    </interactant>
    <interactant intactId="EBI-354022">
        <id>P45880</id>
        <label>VDAC2</label>
    </interactant>
    <organismsDiffer>false</organismsDiffer>
    <experiments>3</experiments>
</comment>
<comment type="interaction">
    <interactant intactId="EBI-748312">
        <id>P49821</id>
    </interactant>
    <interactant intactId="EBI-359832">
        <id>P61981</id>
        <label>YWHAG</label>
    </interactant>
    <organismsDiffer>false</organismsDiffer>
    <experiments>3</experiments>
</comment>
<comment type="subcellular location">
    <subcellularLocation>
        <location evidence="2">Mitochondrion inner membrane</location>
        <topology evidence="2">Peripheral membrane protein</topology>
        <orientation evidence="2">Matrix side</orientation>
    </subcellularLocation>
</comment>
<comment type="alternative products">
    <event type="alternative splicing"/>
    <isoform>
        <id>P49821-1</id>
        <name>1</name>
        <sequence type="displayed"/>
    </isoform>
    <isoform>
        <id>P49821-2</id>
        <name>2</name>
        <sequence type="described" ref="VSP_003730"/>
    </isoform>
</comment>
<comment type="disease" evidence="5 6">
    <disease id="DI-05403">
        <name>Mitochondrial complex I deficiency, nuclear type 4</name>
        <acronym>MC1DN4</acronym>
        <description>A form of mitochondrial complex I deficiency, the most common biochemical signature of mitochondrial disorders, a group of highly heterogeneous conditions characterized by defective oxidative phosphorylation, which collectively affects 1 in 5-10000 live births. Clinical disorders have variable severity, ranging from lethal neonatal disease to adult-onset neurodegenerative disorders. Phenotypes include macrocephaly with progressive leukodystrophy, non-specific encephalopathy, cardiomyopathy, myopathy, liver disease, Leigh syndrome, Leber hereditary optic neuropathy, and some forms of Parkinson disease. MC1DN4 transmission pattern is consistent with autosomal recessive inheritance.</description>
        <dbReference type="MIM" id="618225"/>
    </disease>
    <text>The disease is caused by variants affecting the gene represented in this entry.</text>
</comment>
<comment type="similarity">
    <text evidence="12">Belongs to the complex I 51 kDa subunit family.</text>
</comment>
<accession>P49821</accession>
<accession>O60924</accession>
<accession>O60940</accession>
<accession>Q16104</accession>
<accession>Q6IBR3</accession>
<accession>Q96BF8</accession>
<accession>Q96HS7</accession>
<dbReference type="EC" id="7.1.1.2" evidence="13"/>
<dbReference type="EMBL" id="Y17379">
    <property type="protein sequence ID" value="CAA76757.1"/>
    <property type="molecule type" value="Genomic_DNA"/>
</dbReference>
<dbReference type="EMBL" id="Y17380">
    <property type="protein sequence ID" value="CAA76757.1"/>
    <property type="status" value="JOINED"/>
    <property type="molecule type" value="Genomic_DNA"/>
</dbReference>
<dbReference type="EMBL" id="Y17381">
    <property type="protein sequence ID" value="CAA76757.1"/>
    <property type="status" value="JOINED"/>
    <property type="molecule type" value="Genomic_DNA"/>
</dbReference>
<dbReference type="EMBL" id="Y17382">
    <property type="protein sequence ID" value="CAA76757.1"/>
    <property type="status" value="JOINED"/>
    <property type="molecule type" value="Genomic_DNA"/>
</dbReference>
<dbReference type="EMBL" id="Y17383">
    <property type="protein sequence ID" value="CAA76757.1"/>
    <property type="status" value="JOINED"/>
    <property type="molecule type" value="Genomic_DNA"/>
</dbReference>
<dbReference type="EMBL" id="AF053069">
    <property type="protein sequence ID" value="AAC39750.1"/>
    <property type="molecule type" value="Genomic_DNA"/>
</dbReference>
<dbReference type="EMBL" id="AF053070">
    <property type="protein sequence ID" value="AAC39722.1"/>
    <property type="molecule type" value="mRNA"/>
</dbReference>
<dbReference type="EMBL" id="AF092131">
    <property type="protein sequence ID" value="AAD40373.1"/>
    <property type="molecule type" value="mRNA"/>
</dbReference>
<dbReference type="EMBL" id="CR456739">
    <property type="protein sequence ID" value="CAG33020.1"/>
    <property type="molecule type" value="mRNA"/>
</dbReference>
<dbReference type="EMBL" id="CH471076">
    <property type="protein sequence ID" value="EAW74655.1"/>
    <property type="molecule type" value="Genomic_DNA"/>
</dbReference>
<dbReference type="EMBL" id="BC008146">
    <property type="protein sequence ID" value="AAH08146.1"/>
    <property type="molecule type" value="mRNA"/>
</dbReference>
<dbReference type="EMBL" id="BC015645">
    <property type="protein sequence ID" value="AAH15645.1"/>
    <property type="molecule type" value="mRNA"/>
</dbReference>
<dbReference type="EMBL" id="AH004147">
    <property type="protein sequence ID" value="AAB24883.1"/>
    <property type="molecule type" value="Genomic_DNA"/>
</dbReference>
<dbReference type="EMBL" id="S67973">
    <property type="protein sequence ID" value="AAB29698.2"/>
    <property type="status" value="ALT_SEQ"/>
    <property type="molecule type" value="mRNA"/>
</dbReference>
<dbReference type="CCDS" id="CCDS53669.1">
    <molecule id="P49821-2"/>
</dbReference>
<dbReference type="CCDS" id="CCDS8173.1">
    <molecule id="P49821-1"/>
</dbReference>
<dbReference type="PIR" id="JE0092">
    <property type="entry name" value="JE0092"/>
</dbReference>
<dbReference type="RefSeq" id="NP_001159574.1">
    <molecule id="P49821-2"/>
    <property type="nucleotide sequence ID" value="NM_001166102.2"/>
</dbReference>
<dbReference type="RefSeq" id="NP_009034.2">
    <molecule id="P49821-1"/>
    <property type="nucleotide sequence ID" value="NM_007103.3"/>
</dbReference>
<dbReference type="PDB" id="5XTB">
    <property type="method" value="EM"/>
    <property type="resolution" value="3.40 A"/>
    <property type="chains" value="A=27-457"/>
</dbReference>
<dbReference type="PDB" id="5XTD">
    <property type="method" value="EM"/>
    <property type="resolution" value="3.70 A"/>
    <property type="chains" value="A=27-457"/>
</dbReference>
<dbReference type="PDB" id="5XTH">
    <property type="method" value="EM"/>
    <property type="resolution" value="3.90 A"/>
    <property type="chains" value="A=27-457"/>
</dbReference>
<dbReference type="PDB" id="5XTI">
    <property type="method" value="EM"/>
    <property type="resolution" value="17.40 A"/>
    <property type="chains" value="A/BA=27-457"/>
</dbReference>
<dbReference type="PDBsum" id="5XTB"/>
<dbReference type="PDBsum" id="5XTD"/>
<dbReference type="PDBsum" id="5XTH"/>
<dbReference type="PDBsum" id="5XTI"/>
<dbReference type="SMR" id="P49821"/>
<dbReference type="BioGRID" id="110802">
    <property type="interactions" value="309"/>
</dbReference>
<dbReference type="ComplexPortal" id="CPX-577">
    <property type="entry name" value="Mitochondrial respiratory chain complex I"/>
</dbReference>
<dbReference type="CORUM" id="P49821"/>
<dbReference type="FunCoup" id="P49821">
    <property type="interactions" value="2357"/>
</dbReference>
<dbReference type="IntAct" id="P49821">
    <property type="interactions" value="103"/>
</dbReference>
<dbReference type="MINT" id="P49821"/>
<dbReference type="STRING" id="9606.ENSP00000497587"/>
<dbReference type="BindingDB" id="P49821"/>
<dbReference type="ChEMBL" id="CHEMBL2363065"/>
<dbReference type="DrugBank" id="DB00157">
    <property type="generic name" value="NADH"/>
</dbReference>
<dbReference type="DrugCentral" id="P49821"/>
<dbReference type="CarbonylDB" id="P49821"/>
<dbReference type="GlyGen" id="P49821">
    <property type="glycosylation" value="1 site, 1 O-linked glycan (1 site)"/>
</dbReference>
<dbReference type="iPTMnet" id="P49821"/>
<dbReference type="PhosphoSitePlus" id="P49821"/>
<dbReference type="SwissPalm" id="P49821"/>
<dbReference type="BioMuta" id="NDUFV1"/>
<dbReference type="DMDM" id="20455501"/>
<dbReference type="REPRODUCTION-2DPAGE" id="IPI00028520"/>
<dbReference type="REPRODUCTION-2DPAGE" id="IPI00221298"/>
<dbReference type="jPOST" id="P49821"/>
<dbReference type="MassIVE" id="P49821"/>
<dbReference type="PaxDb" id="9606-ENSP00000322450"/>
<dbReference type="PeptideAtlas" id="P49821"/>
<dbReference type="ProteomicsDB" id="56148">
    <molecule id="P49821-1"/>
</dbReference>
<dbReference type="ProteomicsDB" id="56149">
    <molecule id="P49821-2"/>
</dbReference>
<dbReference type="Pumba" id="P49821"/>
<dbReference type="Antibodypedia" id="30465">
    <property type="antibodies" value="258 antibodies from 30 providers"/>
</dbReference>
<dbReference type="DNASU" id="4723"/>
<dbReference type="Ensembl" id="ENST00000322776.11">
    <molecule id="P49821-1"/>
    <property type="protein sequence ID" value="ENSP00000322450.6"/>
    <property type="gene ID" value="ENSG00000167792.13"/>
</dbReference>
<dbReference type="Ensembl" id="ENST00000529927.5">
    <molecule id="P49821-2"/>
    <property type="protein sequence ID" value="ENSP00000436766.1"/>
    <property type="gene ID" value="ENSG00000167792.13"/>
</dbReference>
<dbReference type="Ensembl" id="ENST00000647561.1">
    <molecule id="P49821-1"/>
    <property type="protein sequence ID" value="ENSP00000497587.1"/>
    <property type="gene ID" value="ENSG00000167792.13"/>
</dbReference>
<dbReference type="GeneID" id="4723"/>
<dbReference type="KEGG" id="hsa:4723"/>
<dbReference type="MANE-Select" id="ENST00000322776.11">
    <property type="protein sequence ID" value="ENSP00000322450.6"/>
    <property type="RefSeq nucleotide sequence ID" value="NM_007103.4"/>
    <property type="RefSeq protein sequence ID" value="NP_009034.2"/>
</dbReference>
<dbReference type="UCSC" id="uc001omj.3">
    <molecule id="P49821-1"/>
    <property type="organism name" value="human"/>
</dbReference>
<dbReference type="AGR" id="HGNC:7716"/>
<dbReference type="CTD" id="4723"/>
<dbReference type="DisGeNET" id="4723"/>
<dbReference type="GeneCards" id="NDUFV1"/>
<dbReference type="GeneReviews" id="NDUFV1"/>
<dbReference type="HGNC" id="HGNC:7716">
    <property type="gene designation" value="NDUFV1"/>
</dbReference>
<dbReference type="HPA" id="ENSG00000167792">
    <property type="expression patterns" value="Low tissue specificity"/>
</dbReference>
<dbReference type="MalaCards" id="NDUFV1"/>
<dbReference type="MIM" id="161015">
    <property type="type" value="gene"/>
</dbReference>
<dbReference type="MIM" id="618225">
    <property type="type" value="phenotype"/>
</dbReference>
<dbReference type="neXtProt" id="NX_P49821"/>
<dbReference type="OpenTargets" id="ENSG00000167792"/>
<dbReference type="Orphanet" id="2609">
    <property type="disease" value="Isolated complex I deficiency"/>
</dbReference>
<dbReference type="PharmGKB" id="PA31526"/>
<dbReference type="VEuPathDB" id="HostDB:ENSG00000167792"/>
<dbReference type="eggNOG" id="KOG2658">
    <property type="taxonomic scope" value="Eukaryota"/>
</dbReference>
<dbReference type="GeneTree" id="ENSGT00390000010641"/>
<dbReference type="HOGENOM" id="CLU_014881_0_1_1"/>
<dbReference type="InParanoid" id="P49821"/>
<dbReference type="OMA" id="QGDGKPH"/>
<dbReference type="OrthoDB" id="42889at2759"/>
<dbReference type="PAN-GO" id="P49821">
    <property type="GO annotations" value="2 GO annotations based on evolutionary models"/>
</dbReference>
<dbReference type="PhylomeDB" id="P49821"/>
<dbReference type="TreeFam" id="TF300381"/>
<dbReference type="BioCyc" id="MetaCyc:HS09641-MONOMER"/>
<dbReference type="PathwayCommons" id="P49821"/>
<dbReference type="Reactome" id="R-HSA-611105">
    <property type="pathway name" value="Respiratory electron transport"/>
</dbReference>
<dbReference type="Reactome" id="R-HSA-6799198">
    <property type="pathway name" value="Complex I biogenesis"/>
</dbReference>
<dbReference type="Reactome" id="R-HSA-9837999">
    <property type="pathway name" value="Mitochondrial protein degradation"/>
</dbReference>
<dbReference type="SignaLink" id="P49821"/>
<dbReference type="SIGNOR" id="P49821"/>
<dbReference type="BioGRID-ORCS" id="4723">
    <property type="hits" value="188 hits in 1175 CRISPR screens"/>
</dbReference>
<dbReference type="ChiTaRS" id="NDUFV1">
    <property type="organism name" value="human"/>
</dbReference>
<dbReference type="GeneWiki" id="NDUFV1"/>
<dbReference type="GenomeRNAi" id="4723"/>
<dbReference type="Pharos" id="P49821">
    <property type="development level" value="Tclin"/>
</dbReference>
<dbReference type="PRO" id="PR:P49821"/>
<dbReference type="Proteomes" id="UP000005640">
    <property type="component" value="Chromosome 11"/>
</dbReference>
<dbReference type="RNAct" id="P49821">
    <property type="molecule type" value="protein"/>
</dbReference>
<dbReference type="Bgee" id="ENSG00000167792">
    <property type="expression patterns" value="Expressed in apex of heart and 201 other cell types or tissues"/>
</dbReference>
<dbReference type="ExpressionAtlas" id="P49821">
    <property type="expression patterns" value="baseline and differential"/>
</dbReference>
<dbReference type="GO" id="GO:0005743">
    <property type="term" value="C:mitochondrial inner membrane"/>
    <property type="evidence" value="ECO:0000314"/>
    <property type="project" value="ComplexPortal"/>
</dbReference>
<dbReference type="GO" id="GO:0005739">
    <property type="term" value="C:mitochondrion"/>
    <property type="evidence" value="ECO:0006056"/>
    <property type="project" value="FlyBase"/>
</dbReference>
<dbReference type="GO" id="GO:0045271">
    <property type="term" value="C:respiratory chain complex I"/>
    <property type="evidence" value="ECO:0000314"/>
    <property type="project" value="UniProtKB"/>
</dbReference>
<dbReference type="GO" id="GO:0051539">
    <property type="term" value="F:4 iron, 4 sulfur cluster binding"/>
    <property type="evidence" value="ECO:0007669"/>
    <property type="project" value="UniProtKB-KW"/>
</dbReference>
<dbReference type="GO" id="GO:0010181">
    <property type="term" value="F:FMN binding"/>
    <property type="evidence" value="ECO:0007669"/>
    <property type="project" value="InterPro"/>
</dbReference>
<dbReference type="GO" id="GO:0046872">
    <property type="term" value="F:metal ion binding"/>
    <property type="evidence" value="ECO:0007669"/>
    <property type="project" value="UniProtKB-KW"/>
</dbReference>
<dbReference type="GO" id="GO:0051287">
    <property type="term" value="F:NAD binding"/>
    <property type="evidence" value="ECO:0007669"/>
    <property type="project" value="InterPro"/>
</dbReference>
<dbReference type="GO" id="GO:0008137">
    <property type="term" value="F:NADH dehydrogenase (ubiquinone) activity"/>
    <property type="evidence" value="ECO:0000314"/>
    <property type="project" value="UniProtKB"/>
</dbReference>
<dbReference type="GO" id="GO:0009060">
    <property type="term" value="P:aerobic respiration"/>
    <property type="evidence" value="ECO:0000303"/>
    <property type="project" value="ComplexPortal"/>
</dbReference>
<dbReference type="GO" id="GO:0042775">
    <property type="term" value="P:mitochondrial ATP synthesis coupled electron transport"/>
    <property type="evidence" value="ECO:0000315"/>
    <property type="project" value="CAFA"/>
</dbReference>
<dbReference type="GO" id="GO:0006120">
    <property type="term" value="P:mitochondrial electron transport, NADH to ubiquinone"/>
    <property type="evidence" value="ECO:0000314"/>
    <property type="project" value="UniProtKB"/>
</dbReference>
<dbReference type="GO" id="GO:0042776">
    <property type="term" value="P:proton motive force-driven mitochondrial ATP synthesis"/>
    <property type="evidence" value="ECO:0000303"/>
    <property type="project" value="ComplexPortal"/>
</dbReference>
<dbReference type="FunFam" id="1.20.1440.230:FF:000001">
    <property type="entry name" value="Mitochondrial NADH dehydrogenase flavoprotein 1"/>
    <property type="match status" value="1"/>
</dbReference>
<dbReference type="FunFam" id="3.10.20.600:FF:000001">
    <property type="entry name" value="NADH dehydrogenase [ubiquinone] flavoprotein 1, mitochondrial"/>
    <property type="match status" value="1"/>
</dbReference>
<dbReference type="FunFam" id="3.40.50.11540:FF:000001">
    <property type="entry name" value="NADH dehydrogenase [ubiquinone] flavoprotein 1, mitochondrial"/>
    <property type="match status" value="1"/>
</dbReference>
<dbReference type="Gene3D" id="3.10.20.600">
    <property type="match status" value="1"/>
</dbReference>
<dbReference type="Gene3D" id="3.40.50.11540">
    <property type="entry name" value="NADH-ubiquinone oxidoreductase 51kDa subunit"/>
    <property type="match status" value="1"/>
</dbReference>
<dbReference type="Gene3D" id="1.20.1440.230">
    <property type="entry name" value="NADH-ubiquinone oxidoreductase 51kDa subunit, iron-sulphur binding domain"/>
    <property type="match status" value="1"/>
</dbReference>
<dbReference type="InterPro" id="IPR050837">
    <property type="entry name" value="ComplexI_51kDa_subunit"/>
</dbReference>
<dbReference type="InterPro" id="IPR001949">
    <property type="entry name" value="NADH-UbQ_OxRdtase_51kDa_CS"/>
</dbReference>
<dbReference type="InterPro" id="IPR011537">
    <property type="entry name" value="NADH-UbQ_OxRdtase_suF"/>
</dbReference>
<dbReference type="InterPro" id="IPR011538">
    <property type="entry name" value="Nuo51_FMN-bd"/>
</dbReference>
<dbReference type="InterPro" id="IPR037225">
    <property type="entry name" value="Nuo51_FMN-bd_sf"/>
</dbReference>
<dbReference type="InterPro" id="IPR019575">
    <property type="entry name" value="Nuop51_4Fe4S-bd"/>
</dbReference>
<dbReference type="InterPro" id="IPR037207">
    <property type="entry name" value="Nuop51_4Fe4S-bd_sf"/>
</dbReference>
<dbReference type="InterPro" id="IPR054765">
    <property type="entry name" value="SLBB_dom"/>
</dbReference>
<dbReference type="NCBIfam" id="TIGR01959">
    <property type="entry name" value="nuoF_fam"/>
    <property type="match status" value="1"/>
</dbReference>
<dbReference type="NCBIfam" id="NF010120">
    <property type="entry name" value="PRK13596.1"/>
    <property type="match status" value="1"/>
</dbReference>
<dbReference type="PANTHER" id="PTHR11780:SF10">
    <property type="entry name" value="NADH DEHYDROGENASE [UBIQUINONE] FLAVOPROTEIN 1, MITOCHONDRIAL"/>
    <property type="match status" value="1"/>
</dbReference>
<dbReference type="PANTHER" id="PTHR11780">
    <property type="entry name" value="NADH-UBIQUINONE OXIDOREDUCTASE FLAVOPROTEIN 1 NDUFV1"/>
    <property type="match status" value="1"/>
</dbReference>
<dbReference type="Pfam" id="PF01512">
    <property type="entry name" value="Complex1_51K"/>
    <property type="match status" value="1"/>
</dbReference>
<dbReference type="Pfam" id="PF10589">
    <property type="entry name" value="NADH_4Fe-4S"/>
    <property type="match status" value="1"/>
</dbReference>
<dbReference type="Pfam" id="PF22461">
    <property type="entry name" value="SLBB_2"/>
    <property type="match status" value="1"/>
</dbReference>
<dbReference type="SMART" id="SM00928">
    <property type="entry name" value="NADH_4Fe-4S"/>
    <property type="match status" value="1"/>
</dbReference>
<dbReference type="SUPFAM" id="SSF142019">
    <property type="entry name" value="Nqo1 FMN-binding domain-like"/>
    <property type="match status" value="1"/>
</dbReference>
<dbReference type="SUPFAM" id="SSF142984">
    <property type="entry name" value="Nqo1 middle domain-like"/>
    <property type="match status" value="1"/>
</dbReference>
<dbReference type="SUPFAM" id="SSF140490">
    <property type="entry name" value="Nqo1C-terminal domain-like"/>
    <property type="match status" value="1"/>
</dbReference>
<dbReference type="PROSITE" id="PS00644">
    <property type="entry name" value="COMPLEX1_51K_1"/>
    <property type="match status" value="1"/>
</dbReference>
<dbReference type="PROSITE" id="PS00645">
    <property type="entry name" value="COMPLEX1_51K_2"/>
    <property type="match status" value="1"/>
</dbReference>
<evidence type="ECO:0000250" key="1"/>
<evidence type="ECO:0000250" key="2">
    <source>
        <dbReference type="UniProtKB" id="P25708"/>
    </source>
</evidence>
<evidence type="ECO:0000250" key="3">
    <source>
        <dbReference type="UniProtKB" id="Q91YT0"/>
    </source>
</evidence>
<evidence type="ECO:0000255" key="4"/>
<evidence type="ECO:0000269" key="5">
    <source>
    </source>
</evidence>
<evidence type="ECO:0000269" key="6">
    <source>
    </source>
</evidence>
<evidence type="ECO:0000269" key="7">
    <source>
    </source>
</evidence>
<evidence type="ECO:0000269" key="8">
    <source>
    </source>
</evidence>
<evidence type="ECO:0000269" key="9">
    <source>
    </source>
</evidence>
<evidence type="ECO:0000303" key="10">
    <source>
    </source>
</evidence>
<evidence type="ECO:0000303" key="11">
    <source>
    </source>
</evidence>
<evidence type="ECO:0000305" key="12"/>
<evidence type="ECO:0000305" key="13">
    <source>
    </source>
</evidence>
<evidence type="ECO:0000312" key="14">
    <source>
        <dbReference type="HGNC" id="HGNC:7716"/>
    </source>
</evidence>
<evidence type="ECO:0007744" key="15">
    <source>
        <dbReference type="PDB" id="5XTB"/>
    </source>
</evidence>
<evidence type="ECO:0007744" key="16">
    <source>
        <dbReference type="PDB" id="5XTD"/>
    </source>
</evidence>
<evidence type="ECO:0007744" key="17">
    <source>
        <dbReference type="PDB" id="5XTH"/>
    </source>
</evidence>
<evidence type="ECO:0007744" key="18">
    <source>
        <dbReference type="PDB" id="5XTI"/>
    </source>
</evidence>
<evidence type="ECO:0007829" key="19">
    <source>
        <dbReference type="PDB" id="5XTB"/>
    </source>
</evidence>
<protein>
    <recommendedName>
        <fullName>NADH dehydrogenase [ubiquinone] flavoprotein 1, mitochondrial</fullName>
        <shortName evidence="11">NDUFV1</shortName>
        <ecNumber evidence="13">7.1.1.2</ecNumber>
    </recommendedName>
    <alternativeName>
        <fullName>Complex I-51kD</fullName>
        <shortName>CI-51kD</shortName>
    </alternativeName>
    <alternativeName>
        <fullName>NADH dehydrogenase flavoprotein 1</fullName>
    </alternativeName>
    <alternativeName>
        <fullName evidence="11">NADH-ubiquinone oxidoreductase 51 kDa subunit</fullName>
    </alternativeName>
</protein>